<gene>
    <name evidence="1" type="primary">leuD</name>
    <name type="ordered locus">Franean1_1114</name>
</gene>
<feature type="chain" id="PRO_1000135809" description="3-isopropylmalate dehydratase small subunit">
    <location>
        <begin position="1"/>
        <end position="195"/>
    </location>
</feature>
<sequence>MEAFTIHTGRAVPLRRSDVDTDQIIPSEWLKRIERTGFGAGLFSEWRADPSFVLNDPAHAGASILLAGPDFGTGSSREHAVWALQDYGFRAVLSPRFADIFRGNALGNGLLPVVLPADTVEALTAAVEADPTTEITVDLVAREVRGAGQVAGFELDDFTRWRLMEGLDDVGLTLRHEQDITVFEASRPGWLPTTA</sequence>
<accession>A8L568</accession>
<protein>
    <recommendedName>
        <fullName evidence="1">3-isopropylmalate dehydratase small subunit</fullName>
        <ecNumber evidence="1">4.2.1.33</ecNumber>
    </recommendedName>
    <alternativeName>
        <fullName evidence="1">Alpha-IPM isomerase</fullName>
        <shortName evidence="1">IPMI</shortName>
    </alternativeName>
    <alternativeName>
        <fullName evidence="1">Isopropylmalate isomerase</fullName>
    </alternativeName>
</protein>
<comment type="function">
    <text evidence="1">Catalyzes the isomerization between 2-isopropylmalate and 3-isopropylmalate, via the formation of 2-isopropylmaleate.</text>
</comment>
<comment type="catalytic activity">
    <reaction evidence="1">
        <text>(2R,3S)-3-isopropylmalate = (2S)-2-isopropylmalate</text>
        <dbReference type="Rhea" id="RHEA:32287"/>
        <dbReference type="ChEBI" id="CHEBI:1178"/>
        <dbReference type="ChEBI" id="CHEBI:35121"/>
        <dbReference type="EC" id="4.2.1.33"/>
    </reaction>
</comment>
<comment type="pathway">
    <text evidence="1">Amino-acid biosynthesis; L-leucine biosynthesis; L-leucine from 3-methyl-2-oxobutanoate: step 2/4.</text>
</comment>
<comment type="subunit">
    <text evidence="1">Heterodimer of LeuC and LeuD.</text>
</comment>
<comment type="similarity">
    <text evidence="1">Belongs to the LeuD family. LeuD type 1 subfamily.</text>
</comment>
<name>LEUD_PARS2</name>
<organism>
    <name type="scientific">Parafrankia sp. (strain EAN1pec)</name>
    <dbReference type="NCBI Taxonomy" id="298653"/>
    <lineage>
        <taxon>Bacteria</taxon>
        <taxon>Bacillati</taxon>
        <taxon>Actinomycetota</taxon>
        <taxon>Actinomycetes</taxon>
        <taxon>Frankiales</taxon>
        <taxon>Frankiaceae</taxon>
        <taxon>Parafrankia</taxon>
    </lineage>
</organism>
<evidence type="ECO:0000255" key="1">
    <source>
        <dbReference type="HAMAP-Rule" id="MF_01031"/>
    </source>
</evidence>
<dbReference type="EC" id="4.2.1.33" evidence="1"/>
<dbReference type="EMBL" id="CP000820">
    <property type="protein sequence ID" value="ABW10568.1"/>
    <property type="molecule type" value="Genomic_DNA"/>
</dbReference>
<dbReference type="RefSeq" id="WP_020458749.1">
    <property type="nucleotide sequence ID" value="NC_009921.1"/>
</dbReference>
<dbReference type="SMR" id="A8L568"/>
<dbReference type="STRING" id="298653.Franean1_1114"/>
<dbReference type="KEGG" id="fre:Franean1_1114"/>
<dbReference type="eggNOG" id="COG0066">
    <property type="taxonomic scope" value="Bacteria"/>
</dbReference>
<dbReference type="HOGENOM" id="CLU_081378_0_1_11"/>
<dbReference type="UniPathway" id="UPA00048">
    <property type="reaction ID" value="UER00071"/>
</dbReference>
<dbReference type="GO" id="GO:0009316">
    <property type="term" value="C:3-isopropylmalate dehydratase complex"/>
    <property type="evidence" value="ECO:0007669"/>
    <property type="project" value="InterPro"/>
</dbReference>
<dbReference type="GO" id="GO:0003861">
    <property type="term" value="F:3-isopropylmalate dehydratase activity"/>
    <property type="evidence" value="ECO:0007669"/>
    <property type="project" value="UniProtKB-UniRule"/>
</dbReference>
<dbReference type="GO" id="GO:0009098">
    <property type="term" value="P:L-leucine biosynthetic process"/>
    <property type="evidence" value="ECO:0007669"/>
    <property type="project" value="UniProtKB-UniRule"/>
</dbReference>
<dbReference type="CDD" id="cd01577">
    <property type="entry name" value="IPMI_Swivel"/>
    <property type="match status" value="1"/>
</dbReference>
<dbReference type="FunFam" id="3.20.19.10:FF:000003">
    <property type="entry name" value="3-isopropylmalate dehydratase small subunit"/>
    <property type="match status" value="1"/>
</dbReference>
<dbReference type="Gene3D" id="3.20.19.10">
    <property type="entry name" value="Aconitase, domain 4"/>
    <property type="match status" value="1"/>
</dbReference>
<dbReference type="HAMAP" id="MF_01031">
    <property type="entry name" value="LeuD_type1"/>
    <property type="match status" value="1"/>
</dbReference>
<dbReference type="InterPro" id="IPR004431">
    <property type="entry name" value="3-IsopropMal_deHydase_ssu"/>
</dbReference>
<dbReference type="InterPro" id="IPR015928">
    <property type="entry name" value="Aconitase/3IPM_dehydase_swvl"/>
</dbReference>
<dbReference type="InterPro" id="IPR000573">
    <property type="entry name" value="AconitaseA/IPMdHydase_ssu_swvl"/>
</dbReference>
<dbReference type="InterPro" id="IPR033940">
    <property type="entry name" value="IPMI_Swivel"/>
</dbReference>
<dbReference type="InterPro" id="IPR050075">
    <property type="entry name" value="LeuD"/>
</dbReference>
<dbReference type="NCBIfam" id="TIGR00171">
    <property type="entry name" value="leuD"/>
    <property type="match status" value="1"/>
</dbReference>
<dbReference type="NCBIfam" id="NF002458">
    <property type="entry name" value="PRK01641.1"/>
    <property type="match status" value="1"/>
</dbReference>
<dbReference type="PANTHER" id="PTHR43345:SF5">
    <property type="entry name" value="3-ISOPROPYLMALATE DEHYDRATASE SMALL SUBUNIT"/>
    <property type="match status" value="1"/>
</dbReference>
<dbReference type="PANTHER" id="PTHR43345">
    <property type="entry name" value="3-ISOPROPYLMALATE DEHYDRATASE SMALL SUBUNIT 2-RELATED-RELATED"/>
    <property type="match status" value="1"/>
</dbReference>
<dbReference type="Pfam" id="PF00694">
    <property type="entry name" value="Aconitase_C"/>
    <property type="match status" value="1"/>
</dbReference>
<dbReference type="SUPFAM" id="SSF52016">
    <property type="entry name" value="LeuD/IlvD-like"/>
    <property type="match status" value="1"/>
</dbReference>
<reference key="1">
    <citation type="journal article" date="2007" name="Genome Res.">
        <title>Genome characteristics of facultatively symbiotic Frankia sp. strains reflect host range and host plant biogeography.</title>
        <authorList>
            <person name="Normand P."/>
            <person name="Lapierre P."/>
            <person name="Tisa L.S."/>
            <person name="Gogarten J.P."/>
            <person name="Alloisio N."/>
            <person name="Bagnarol E."/>
            <person name="Bassi C.A."/>
            <person name="Berry A.M."/>
            <person name="Bickhart D.M."/>
            <person name="Choisne N."/>
            <person name="Couloux A."/>
            <person name="Cournoyer B."/>
            <person name="Cruveiller S."/>
            <person name="Daubin V."/>
            <person name="Demange N."/>
            <person name="Francino M.P."/>
            <person name="Goltsman E."/>
            <person name="Huang Y."/>
            <person name="Kopp O.R."/>
            <person name="Labarre L."/>
            <person name="Lapidus A."/>
            <person name="Lavire C."/>
            <person name="Marechal J."/>
            <person name="Martinez M."/>
            <person name="Mastronunzio J.E."/>
            <person name="Mullin B.C."/>
            <person name="Niemann J."/>
            <person name="Pujic P."/>
            <person name="Rawnsley T."/>
            <person name="Rouy Z."/>
            <person name="Schenowitz C."/>
            <person name="Sellstedt A."/>
            <person name="Tavares F."/>
            <person name="Tomkins J.P."/>
            <person name="Vallenet D."/>
            <person name="Valverde C."/>
            <person name="Wall L.G."/>
            <person name="Wang Y."/>
            <person name="Medigue C."/>
            <person name="Benson D.R."/>
        </authorList>
    </citation>
    <scope>NUCLEOTIDE SEQUENCE [LARGE SCALE GENOMIC DNA]</scope>
    <source>
        <strain>EAN1pec</strain>
    </source>
</reference>
<proteinExistence type="inferred from homology"/>
<keyword id="KW-0028">Amino-acid biosynthesis</keyword>
<keyword id="KW-0100">Branched-chain amino acid biosynthesis</keyword>
<keyword id="KW-0432">Leucine biosynthesis</keyword>
<keyword id="KW-0456">Lyase</keyword>